<dbReference type="EC" id="3.1.1.29" evidence="1"/>
<dbReference type="EMBL" id="AL766843">
    <property type="protein sequence ID" value="CAD45652.1"/>
    <property type="molecule type" value="Genomic_DNA"/>
</dbReference>
<dbReference type="RefSeq" id="WP_000240196.1">
    <property type="nucleotide sequence ID" value="NC_004368.1"/>
</dbReference>
<dbReference type="SMR" id="Q8E7Y8"/>
<dbReference type="KEGG" id="san:gbs0007"/>
<dbReference type="eggNOG" id="COG0193">
    <property type="taxonomic scope" value="Bacteria"/>
</dbReference>
<dbReference type="HOGENOM" id="CLU_062456_4_1_9"/>
<dbReference type="Proteomes" id="UP000000823">
    <property type="component" value="Chromosome"/>
</dbReference>
<dbReference type="GO" id="GO:0005737">
    <property type="term" value="C:cytoplasm"/>
    <property type="evidence" value="ECO:0007669"/>
    <property type="project" value="UniProtKB-SubCell"/>
</dbReference>
<dbReference type="GO" id="GO:0004045">
    <property type="term" value="F:peptidyl-tRNA hydrolase activity"/>
    <property type="evidence" value="ECO:0007669"/>
    <property type="project" value="UniProtKB-UniRule"/>
</dbReference>
<dbReference type="GO" id="GO:0000049">
    <property type="term" value="F:tRNA binding"/>
    <property type="evidence" value="ECO:0007669"/>
    <property type="project" value="UniProtKB-UniRule"/>
</dbReference>
<dbReference type="GO" id="GO:0006515">
    <property type="term" value="P:protein quality control for misfolded or incompletely synthesized proteins"/>
    <property type="evidence" value="ECO:0007669"/>
    <property type="project" value="UniProtKB-UniRule"/>
</dbReference>
<dbReference type="GO" id="GO:0072344">
    <property type="term" value="P:rescue of stalled ribosome"/>
    <property type="evidence" value="ECO:0007669"/>
    <property type="project" value="UniProtKB-UniRule"/>
</dbReference>
<dbReference type="CDD" id="cd00462">
    <property type="entry name" value="PTH"/>
    <property type="match status" value="1"/>
</dbReference>
<dbReference type="FunFam" id="3.40.50.1470:FF:000001">
    <property type="entry name" value="Peptidyl-tRNA hydrolase"/>
    <property type="match status" value="1"/>
</dbReference>
<dbReference type="Gene3D" id="3.40.50.1470">
    <property type="entry name" value="Peptidyl-tRNA hydrolase"/>
    <property type="match status" value="1"/>
</dbReference>
<dbReference type="HAMAP" id="MF_00083">
    <property type="entry name" value="Pept_tRNA_hydro_bact"/>
    <property type="match status" value="1"/>
</dbReference>
<dbReference type="InterPro" id="IPR001328">
    <property type="entry name" value="Pept_tRNA_hydro"/>
</dbReference>
<dbReference type="InterPro" id="IPR018171">
    <property type="entry name" value="Pept_tRNA_hydro_CS"/>
</dbReference>
<dbReference type="InterPro" id="IPR036416">
    <property type="entry name" value="Pept_tRNA_hydro_sf"/>
</dbReference>
<dbReference type="NCBIfam" id="TIGR00447">
    <property type="entry name" value="pth"/>
    <property type="match status" value="1"/>
</dbReference>
<dbReference type="PANTHER" id="PTHR17224">
    <property type="entry name" value="PEPTIDYL-TRNA HYDROLASE"/>
    <property type="match status" value="1"/>
</dbReference>
<dbReference type="PANTHER" id="PTHR17224:SF1">
    <property type="entry name" value="PEPTIDYL-TRNA HYDROLASE"/>
    <property type="match status" value="1"/>
</dbReference>
<dbReference type="Pfam" id="PF01195">
    <property type="entry name" value="Pept_tRNA_hydro"/>
    <property type="match status" value="1"/>
</dbReference>
<dbReference type="SUPFAM" id="SSF53178">
    <property type="entry name" value="Peptidyl-tRNA hydrolase-like"/>
    <property type="match status" value="1"/>
</dbReference>
<dbReference type="PROSITE" id="PS01195">
    <property type="entry name" value="PEPT_TRNA_HYDROL_1"/>
    <property type="match status" value="1"/>
</dbReference>
<dbReference type="PROSITE" id="PS01196">
    <property type="entry name" value="PEPT_TRNA_HYDROL_2"/>
    <property type="match status" value="1"/>
</dbReference>
<gene>
    <name evidence="1" type="primary">pth</name>
    <name type="ordered locus">gbs0007</name>
</gene>
<reference key="1">
    <citation type="journal article" date="2002" name="Mol. Microbiol.">
        <title>Genome sequence of Streptococcus agalactiae, a pathogen causing invasive neonatal disease.</title>
        <authorList>
            <person name="Glaser P."/>
            <person name="Rusniok C."/>
            <person name="Buchrieser C."/>
            <person name="Chevalier F."/>
            <person name="Frangeul L."/>
            <person name="Msadek T."/>
            <person name="Zouine M."/>
            <person name="Couve E."/>
            <person name="Lalioui L."/>
            <person name="Poyart C."/>
            <person name="Trieu-Cuot P."/>
            <person name="Kunst F."/>
        </authorList>
    </citation>
    <scope>NUCLEOTIDE SEQUENCE [LARGE SCALE GENOMIC DNA]</scope>
    <source>
        <strain>NEM316</strain>
    </source>
</reference>
<protein>
    <recommendedName>
        <fullName evidence="1">Peptidyl-tRNA hydrolase</fullName>
        <shortName evidence="1">Pth</shortName>
        <ecNumber evidence="1">3.1.1.29</ecNumber>
    </recommendedName>
</protein>
<comment type="function">
    <text evidence="1">Hydrolyzes ribosome-free peptidyl-tRNAs (with 1 or more amino acids incorporated), which drop off the ribosome during protein synthesis, or as a result of ribosome stalling.</text>
</comment>
<comment type="function">
    <text evidence="1">Catalyzes the release of premature peptidyl moieties from peptidyl-tRNA molecules trapped in stalled 50S ribosomal subunits, and thus maintains levels of free tRNAs and 50S ribosomes.</text>
</comment>
<comment type="catalytic activity">
    <reaction evidence="1">
        <text>an N-acyl-L-alpha-aminoacyl-tRNA + H2O = an N-acyl-L-amino acid + a tRNA + H(+)</text>
        <dbReference type="Rhea" id="RHEA:54448"/>
        <dbReference type="Rhea" id="RHEA-COMP:10123"/>
        <dbReference type="Rhea" id="RHEA-COMP:13883"/>
        <dbReference type="ChEBI" id="CHEBI:15377"/>
        <dbReference type="ChEBI" id="CHEBI:15378"/>
        <dbReference type="ChEBI" id="CHEBI:59874"/>
        <dbReference type="ChEBI" id="CHEBI:78442"/>
        <dbReference type="ChEBI" id="CHEBI:138191"/>
        <dbReference type="EC" id="3.1.1.29"/>
    </reaction>
</comment>
<comment type="subunit">
    <text evidence="1">Monomer.</text>
</comment>
<comment type="subcellular location">
    <subcellularLocation>
        <location evidence="1">Cytoplasm</location>
    </subcellularLocation>
</comment>
<comment type="similarity">
    <text evidence="1">Belongs to the PTH family.</text>
</comment>
<keyword id="KW-0963">Cytoplasm</keyword>
<keyword id="KW-0378">Hydrolase</keyword>
<keyword id="KW-0694">RNA-binding</keyword>
<keyword id="KW-0820">tRNA-binding</keyword>
<proteinExistence type="inferred from homology"/>
<name>PTH_STRA3</name>
<accession>Q8E7Y8</accession>
<evidence type="ECO:0000255" key="1">
    <source>
        <dbReference type="HAMAP-Rule" id="MF_00083"/>
    </source>
</evidence>
<organism>
    <name type="scientific">Streptococcus agalactiae serotype III (strain NEM316)</name>
    <dbReference type="NCBI Taxonomy" id="211110"/>
    <lineage>
        <taxon>Bacteria</taxon>
        <taxon>Bacillati</taxon>
        <taxon>Bacillota</taxon>
        <taxon>Bacilli</taxon>
        <taxon>Lactobacillales</taxon>
        <taxon>Streptococcaceae</taxon>
        <taxon>Streptococcus</taxon>
    </lineage>
</organism>
<feature type="chain" id="PRO_0000187823" description="Peptidyl-tRNA hydrolase">
    <location>
        <begin position="1"/>
        <end position="191"/>
    </location>
</feature>
<feature type="active site" description="Proton acceptor" evidence="1">
    <location>
        <position position="20"/>
    </location>
</feature>
<feature type="binding site" evidence="1">
    <location>
        <position position="15"/>
    </location>
    <ligand>
        <name>tRNA</name>
        <dbReference type="ChEBI" id="CHEBI:17843"/>
    </ligand>
</feature>
<feature type="binding site" evidence="1">
    <location>
        <position position="66"/>
    </location>
    <ligand>
        <name>tRNA</name>
        <dbReference type="ChEBI" id="CHEBI:17843"/>
    </ligand>
</feature>
<feature type="binding site" evidence="1">
    <location>
        <position position="68"/>
    </location>
    <ligand>
        <name>tRNA</name>
        <dbReference type="ChEBI" id="CHEBI:17843"/>
    </ligand>
</feature>
<feature type="binding site" evidence="1">
    <location>
        <position position="114"/>
    </location>
    <ligand>
        <name>tRNA</name>
        <dbReference type="ChEBI" id="CHEBI:17843"/>
    </ligand>
</feature>
<feature type="site" description="Discriminates between blocked and unblocked aminoacyl-tRNA" evidence="1">
    <location>
        <position position="10"/>
    </location>
</feature>
<feature type="site" description="Stabilizes the basic form of H active site to accept a proton" evidence="1">
    <location>
        <position position="93"/>
    </location>
</feature>
<sequence length="191" mass="21609">MVKMIVGLGNPGSKYNDTKHNIGFMAVDRIVKDLDVNFTEDKNFKAEIGSDFINGEKIYFIKPTTFMNNSGIAVKALLTYYNISIKDMIIIYDDLDMEVGKIRFRQKGSAGGHNGIKSIIAHLGTQEFDRIKVGIGRPNGRMTVINHVLGKFDKNDEIMILNTLDKVDNAVNYYLQTNDFQKTMQKYNGLK</sequence>